<reference key="1">
    <citation type="submission" date="2003-10" db="EMBL/GenBank/DDBJ databases">
        <title>The complete genome sequence of the alkaliphilic Bacillus clausii KSM-K16.</title>
        <authorList>
            <person name="Takaki Y."/>
            <person name="Kageyama Y."/>
            <person name="Shimamura S."/>
            <person name="Suzuki H."/>
            <person name="Nishi S."/>
            <person name="Hatada Y."/>
            <person name="Kawai S."/>
            <person name="Ito S."/>
            <person name="Horikoshi K."/>
        </authorList>
    </citation>
    <scope>NUCLEOTIDE SEQUENCE [LARGE SCALE GENOMIC DNA]</scope>
    <source>
        <strain>KSM-K16</strain>
    </source>
</reference>
<keyword id="KW-1003">Cell membrane</keyword>
<keyword id="KW-0407">Ion channel</keyword>
<keyword id="KW-0406">Ion transport</keyword>
<keyword id="KW-0472">Membrane</keyword>
<keyword id="KW-0479">Metal-binding</keyword>
<keyword id="KW-1185">Reference proteome</keyword>
<keyword id="KW-0915">Sodium</keyword>
<keyword id="KW-0812">Transmembrane</keyword>
<keyword id="KW-1133">Transmembrane helix</keyword>
<keyword id="KW-0813">Transport</keyword>
<protein>
    <recommendedName>
        <fullName evidence="1">Fluoride-specific ion channel FluC 2</fullName>
    </recommendedName>
</protein>
<dbReference type="EMBL" id="AP006627">
    <property type="protein sequence ID" value="BAD63404.1"/>
    <property type="molecule type" value="Genomic_DNA"/>
</dbReference>
<dbReference type="SMR" id="Q5WJQ1"/>
<dbReference type="STRING" id="66692.ABC0865"/>
<dbReference type="KEGG" id="bcl:ABC0865"/>
<dbReference type="eggNOG" id="COG0239">
    <property type="taxonomic scope" value="Bacteria"/>
</dbReference>
<dbReference type="HOGENOM" id="CLU_114342_3_2_9"/>
<dbReference type="Proteomes" id="UP000001168">
    <property type="component" value="Chromosome"/>
</dbReference>
<dbReference type="GO" id="GO:0005886">
    <property type="term" value="C:plasma membrane"/>
    <property type="evidence" value="ECO:0007669"/>
    <property type="project" value="UniProtKB-SubCell"/>
</dbReference>
<dbReference type="GO" id="GO:0062054">
    <property type="term" value="F:fluoride channel activity"/>
    <property type="evidence" value="ECO:0007669"/>
    <property type="project" value="UniProtKB-UniRule"/>
</dbReference>
<dbReference type="GO" id="GO:0046872">
    <property type="term" value="F:metal ion binding"/>
    <property type="evidence" value="ECO:0007669"/>
    <property type="project" value="UniProtKB-KW"/>
</dbReference>
<dbReference type="GO" id="GO:0140114">
    <property type="term" value="P:cellular detoxification of fluoride"/>
    <property type="evidence" value="ECO:0007669"/>
    <property type="project" value="UniProtKB-UniRule"/>
</dbReference>
<dbReference type="HAMAP" id="MF_00454">
    <property type="entry name" value="FluC"/>
    <property type="match status" value="1"/>
</dbReference>
<dbReference type="InterPro" id="IPR003691">
    <property type="entry name" value="FluC"/>
</dbReference>
<dbReference type="PANTHER" id="PTHR28259">
    <property type="entry name" value="FLUORIDE EXPORT PROTEIN 1-RELATED"/>
    <property type="match status" value="1"/>
</dbReference>
<dbReference type="PANTHER" id="PTHR28259:SF1">
    <property type="entry name" value="FLUORIDE EXPORT PROTEIN 1-RELATED"/>
    <property type="match status" value="1"/>
</dbReference>
<dbReference type="Pfam" id="PF02537">
    <property type="entry name" value="CRCB"/>
    <property type="match status" value="1"/>
</dbReference>
<name>FLUC2_SHOC1</name>
<proteinExistence type="inferred from homology"/>
<organism>
    <name type="scientific">Shouchella clausii (strain KSM-K16)</name>
    <name type="common">Alkalihalobacillus clausii</name>
    <dbReference type="NCBI Taxonomy" id="66692"/>
    <lineage>
        <taxon>Bacteria</taxon>
        <taxon>Bacillati</taxon>
        <taxon>Bacillota</taxon>
        <taxon>Bacilli</taxon>
        <taxon>Bacillales</taxon>
        <taxon>Bacillaceae</taxon>
        <taxon>Shouchella</taxon>
    </lineage>
</organism>
<gene>
    <name evidence="1" type="primary">fluC2</name>
    <name evidence="1" type="synonym">crcB2</name>
    <name type="ordered locus">ABC0865</name>
</gene>
<evidence type="ECO:0000255" key="1">
    <source>
        <dbReference type="HAMAP-Rule" id="MF_00454"/>
    </source>
</evidence>
<sequence>MMYVIIGGAVGACLRFAVSECWLKFGKNAQLMTAVFVINISGCAMLGWILAKPLPEGIELLFISMLGGFTTFSTFCMEALELWRLKKRKQAMIYLVISIVGSLFGFLFGWNVRA</sequence>
<feature type="chain" id="PRO_0000110055" description="Fluoride-specific ion channel FluC 2">
    <location>
        <begin position="1"/>
        <end position="114"/>
    </location>
</feature>
<feature type="transmembrane region" description="Helical" evidence="1">
    <location>
        <begin position="3"/>
        <end position="23"/>
    </location>
</feature>
<feature type="transmembrane region" description="Helical" evidence="1">
    <location>
        <begin position="31"/>
        <end position="51"/>
    </location>
</feature>
<feature type="transmembrane region" description="Helical" evidence="1">
    <location>
        <begin position="57"/>
        <end position="77"/>
    </location>
</feature>
<feature type="transmembrane region" description="Helical" evidence="1">
    <location>
        <begin position="92"/>
        <end position="112"/>
    </location>
</feature>
<feature type="binding site" evidence="1">
    <location>
        <position position="67"/>
    </location>
    <ligand>
        <name>Na(+)</name>
        <dbReference type="ChEBI" id="CHEBI:29101"/>
        <note>structural</note>
    </ligand>
</feature>
<feature type="binding site" evidence="1">
    <location>
        <position position="70"/>
    </location>
    <ligand>
        <name>Na(+)</name>
        <dbReference type="ChEBI" id="CHEBI:29101"/>
        <note>structural</note>
    </ligand>
</feature>
<accession>Q5WJQ1</accession>
<comment type="function">
    <text evidence="1">Fluoride-specific ion channel. Important for reducing fluoride concentration in the cell, thus reducing its toxicity.</text>
</comment>
<comment type="catalytic activity">
    <reaction evidence="1">
        <text>fluoride(in) = fluoride(out)</text>
        <dbReference type="Rhea" id="RHEA:76159"/>
        <dbReference type="ChEBI" id="CHEBI:17051"/>
    </reaction>
    <physiologicalReaction direction="left-to-right" evidence="1">
        <dbReference type="Rhea" id="RHEA:76160"/>
    </physiologicalReaction>
</comment>
<comment type="activity regulation">
    <text evidence="1">Na(+) is not transported, but it plays an essential structural role and its presence is essential for fluoride channel function.</text>
</comment>
<comment type="subcellular location">
    <subcellularLocation>
        <location evidence="1">Cell membrane</location>
        <topology evidence="1">Multi-pass membrane protein</topology>
    </subcellularLocation>
</comment>
<comment type="similarity">
    <text evidence="1">Belongs to the fluoride channel Fluc/FEX (TC 1.A.43) family.</text>
</comment>